<organism>
    <name type="scientific">Chlamydia muridarum (strain MoPn / Nigg)</name>
    <dbReference type="NCBI Taxonomy" id="243161"/>
    <lineage>
        <taxon>Bacteria</taxon>
        <taxon>Pseudomonadati</taxon>
        <taxon>Chlamydiota</taxon>
        <taxon>Chlamydiia</taxon>
        <taxon>Chlamydiales</taxon>
        <taxon>Chlamydiaceae</taxon>
        <taxon>Chlamydia/Chlamydophila group</taxon>
        <taxon>Chlamydia</taxon>
    </lineage>
</organism>
<feature type="chain" id="PRO_0000102585" description="ADP,ATP carrier protein 1">
    <location>
        <begin position="1"/>
        <end position="529"/>
    </location>
</feature>
<feature type="transmembrane region" description="Helical" evidence="1">
    <location>
        <begin position="24"/>
        <end position="44"/>
    </location>
</feature>
<feature type="transmembrane region" description="Helical" evidence="1">
    <location>
        <begin position="63"/>
        <end position="83"/>
    </location>
</feature>
<feature type="transmembrane region" description="Helical" evidence="1">
    <location>
        <begin position="93"/>
        <end position="113"/>
    </location>
</feature>
<feature type="transmembrane region" description="Helical" evidence="1">
    <location>
        <begin position="124"/>
        <end position="144"/>
    </location>
</feature>
<feature type="transmembrane region" description="Helical" evidence="1">
    <location>
        <begin position="149"/>
        <end position="169"/>
    </location>
</feature>
<feature type="transmembrane region" description="Helical" evidence="1">
    <location>
        <begin position="184"/>
        <end position="204"/>
    </location>
</feature>
<feature type="transmembrane region" description="Helical" evidence="1">
    <location>
        <begin position="220"/>
        <end position="240"/>
    </location>
</feature>
<feature type="transmembrane region" description="Helical" evidence="1">
    <location>
        <begin position="284"/>
        <end position="304"/>
    </location>
</feature>
<feature type="transmembrane region" description="Helical" evidence="1">
    <location>
        <begin position="322"/>
        <end position="342"/>
    </location>
</feature>
<feature type="transmembrane region" description="Helical" evidence="1">
    <location>
        <begin position="356"/>
        <end position="376"/>
    </location>
</feature>
<feature type="transmembrane region" description="Helical" evidence="1">
    <location>
        <begin position="381"/>
        <end position="401"/>
    </location>
</feature>
<feature type="transmembrane region" description="Helical" evidence="1">
    <location>
        <begin position="463"/>
        <end position="483"/>
    </location>
</feature>
<feature type="region of interest" description="Disordered" evidence="2">
    <location>
        <begin position="509"/>
        <end position="529"/>
    </location>
</feature>
<feature type="compositionally biased region" description="Low complexity" evidence="2">
    <location>
        <begin position="509"/>
        <end position="520"/>
    </location>
</feature>
<evidence type="ECO:0000255" key="1"/>
<evidence type="ECO:0000256" key="2">
    <source>
        <dbReference type="SAM" id="MobiDB-lite"/>
    </source>
</evidence>
<evidence type="ECO:0000305" key="3"/>
<protein>
    <recommendedName>
        <fullName>ADP,ATP carrier protein 1</fullName>
    </recommendedName>
    <alternativeName>
        <fullName>ADP/ATP translocase 1</fullName>
    </alternativeName>
</protein>
<keyword id="KW-0067">ATP-binding</keyword>
<keyword id="KW-1003">Cell membrane</keyword>
<keyword id="KW-0472">Membrane</keyword>
<keyword id="KW-0547">Nucleotide-binding</keyword>
<keyword id="KW-0812">Transmembrane</keyword>
<keyword id="KW-1133">Transmembrane helix</keyword>
<keyword id="KW-0813">Transport</keyword>
<proteinExistence type="inferred from homology"/>
<sequence length="529" mass="58304">MTQTAEKPFGKLRSFLWPIHMHELKKVLPMFLMFFCISFNYTILRDTKDTLIVTAPGSGAEAIPFIKLWLVVPSAVVFMLIYAKLSNILSKQALFYAVLSPFVVFFALFPLVIYPYRHILHPTDFADTLQAILPSGFLGFIAMLRNWTFAAFYVLSELWGSVMLSLMFWGFANEITKISEAKRFYALFGVGANVALLISGPAIVWSSKLRASLGEGVDPWGVTLYFLMAMFLCSCAIIAACYWWMNRYVLTDPRFYNPAELKAKKSKPKMSMGESFSYLLRSPYMLLLALLVICYGVCINLVEVTWKSQLKMQFPNPNEYSAFMGTFSFWTGVVSVFVMLFIGGNVIRRFGWLTGALVTPVMVLVTGAIFFALVIFRDHATGLVAALGTTPLMLAVVVGAVQNILSKSTKYALFDATKEMAYIPLDQEQKVKGKAAIDVVAARFGKSGGSLIQQGLLVVCGSISAMTPFLAVALFAIIMVWLTSATKLNKLFLAASAAKEQELAEATAAAEKEASPAAKEVSPAIEGVS</sequence>
<reference key="1">
    <citation type="journal article" date="2000" name="Nucleic Acids Res.">
        <title>Genome sequences of Chlamydia trachomatis MoPn and Chlamydia pneumoniae AR39.</title>
        <authorList>
            <person name="Read T.D."/>
            <person name="Brunham R.C."/>
            <person name="Shen C."/>
            <person name="Gill S.R."/>
            <person name="Heidelberg J.F."/>
            <person name="White O."/>
            <person name="Hickey E.K."/>
            <person name="Peterson J.D."/>
            <person name="Utterback T.R."/>
            <person name="Berry K.J."/>
            <person name="Bass S."/>
            <person name="Linher K.D."/>
            <person name="Weidman J.F."/>
            <person name="Khouri H.M."/>
            <person name="Craven B."/>
            <person name="Bowman C."/>
            <person name="Dodson R.J."/>
            <person name="Gwinn M.L."/>
            <person name="Nelson W.C."/>
            <person name="DeBoy R.T."/>
            <person name="Kolonay J.F."/>
            <person name="McClarty G."/>
            <person name="Salzberg S.L."/>
            <person name="Eisen J.A."/>
            <person name="Fraser C.M."/>
        </authorList>
    </citation>
    <scope>NUCLEOTIDE SEQUENCE [LARGE SCALE GENOMIC DNA]</scope>
    <source>
        <strain>MoPn / Nigg</strain>
    </source>
</reference>
<gene>
    <name type="primary">tlcA</name>
    <name type="ordered locus">TC_0335</name>
</gene>
<accession>Q9PKX5</accession>
<dbReference type="EMBL" id="AE002160">
    <property type="protein sequence ID" value="AAF39198.1"/>
    <property type="molecule type" value="Genomic_DNA"/>
</dbReference>
<dbReference type="PIR" id="C81714">
    <property type="entry name" value="C81714"/>
</dbReference>
<dbReference type="GeneID" id="1246379"/>
<dbReference type="KEGG" id="cmu:TC_0335"/>
<dbReference type="eggNOG" id="COG3202">
    <property type="taxonomic scope" value="Bacteria"/>
</dbReference>
<dbReference type="HOGENOM" id="CLU_023964_0_1_0"/>
<dbReference type="OrthoDB" id="19786at2"/>
<dbReference type="Proteomes" id="UP000000800">
    <property type="component" value="Chromosome"/>
</dbReference>
<dbReference type="GO" id="GO:0005886">
    <property type="term" value="C:plasma membrane"/>
    <property type="evidence" value="ECO:0007669"/>
    <property type="project" value="UniProtKB-SubCell"/>
</dbReference>
<dbReference type="GO" id="GO:0005524">
    <property type="term" value="F:ATP binding"/>
    <property type="evidence" value="ECO:0007669"/>
    <property type="project" value="UniProtKB-KW"/>
</dbReference>
<dbReference type="GO" id="GO:0005471">
    <property type="term" value="F:ATP:ADP antiporter activity"/>
    <property type="evidence" value="ECO:0007669"/>
    <property type="project" value="InterPro"/>
</dbReference>
<dbReference type="InterPro" id="IPR004667">
    <property type="entry name" value="ADP_ATP_car_bac_type"/>
</dbReference>
<dbReference type="InterPro" id="IPR036259">
    <property type="entry name" value="MFS_trans_sf"/>
</dbReference>
<dbReference type="NCBIfam" id="TIGR00769">
    <property type="entry name" value="AAA"/>
    <property type="match status" value="1"/>
</dbReference>
<dbReference type="PANTHER" id="PTHR31187">
    <property type="match status" value="1"/>
</dbReference>
<dbReference type="PANTHER" id="PTHR31187:SF1">
    <property type="entry name" value="ADP,ATP CARRIER PROTEIN 1"/>
    <property type="match status" value="1"/>
</dbReference>
<dbReference type="Pfam" id="PF03219">
    <property type="entry name" value="TLC"/>
    <property type="match status" value="1"/>
</dbReference>
<dbReference type="SUPFAM" id="SSF103473">
    <property type="entry name" value="MFS general substrate transporter"/>
    <property type="match status" value="1"/>
</dbReference>
<name>TLC1_CHLMU</name>
<comment type="subcellular location">
    <subcellularLocation>
        <location evidence="3">Cell membrane</location>
        <topology evidence="3">Multi-pass membrane protein</topology>
    </subcellularLocation>
</comment>
<comment type="similarity">
    <text evidence="3">Belongs to the ADP/ATP translocase tlc family.</text>
</comment>